<feature type="chain" id="PRO_0000362425" description="ATP synthase subunit a">
    <location>
        <begin position="1"/>
        <end position="242"/>
    </location>
</feature>
<feature type="transmembrane region" description="Helical" evidence="1">
    <location>
        <begin position="31"/>
        <end position="51"/>
    </location>
</feature>
<feature type="transmembrane region" description="Helical" evidence="1">
    <location>
        <begin position="84"/>
        <end position="104"/>
    </location>
</feature>
<feature type="transmembrane region" description="Helical" evidence="1">
    <location>
        <begin position="114"/>
        <end position="134"/>
    </location>
</feature>
<feature type="transmembrane region" description="Helical" evidence="1">
    <location>
        <begin position="140"/>
        <end position="160"/>
    </location>
</feature>
<feature type="transmembrane region" description="Helical" evidence="1">
    <location>
        <begin position="189"/>
        <end position="209"/>
    </location>
</feature>
<feature type="transmembrane region" description="Helical" evidence="1">
    <location>
        <begin position="210"/>
        <end position="230"/>
    </location>
</feature>
<accession>A8EX90</accession>
<proteinExistence type="inferred from homology"/>
<dbReference type="EMBL" id="CP000409">
    <property type="protein sequence ID" value="ABV72973.1"/>
    <property type="molecule type" value="Genomic_DNA"/>
</dbReference>
<dbReference type="RefSeq" id="WP_012148174.1">
    <property type="nucleotide sequence ID" value="NC_009879.1"/>
</dbReference>
<dbReference type="SMR" id="A8EX90"/>
<dbReference type="STRING" id="293613.A1E_00100"/>
<dbReference type="KEGG" id="rcm:A1E_00100"/>
<dbReference type="eggNOG" id="COG0356">
    <property type="taxonomic scope" value="Bacteria"/>
</dbReference>
<dbReference type="HOGENOM" id="CLU_041018_0_2_5"/>
<dbReference type="Proteomes" id="UP000007056">
    <property type="component" value="Chromosome"/>
</dbReference>
<dbReference type="GO" id="GO:0005886">
    <property type="term" value="C:plasma membrane"/>
    <property type="evidence" value="ECO:0007669"/>
    <property type="project" value="UniProtKB-SubCell"/>
</dbReference>
<dbReference type="GO" id="GO:0045259">
    <property type="term" value="C:proton-transporting ATP synthase complex"/>
    <property type="evidence" value="ECO:0007669"/>
    <property type="project" value="UniProtKB-KW"/>
</dbReference>
<dbReference type="GO" id="GO:0046933">
    <property type="term" value="F:proton-transporting ATP synthase activity, rotational mechanism"/>
    <property type="evidence" value="ECO:0007669"/>
    <property type="project" value="UniProtKB-UniRule"/>
</dbReference>
<dbReference type="CDD" id="cd00310">
    <property type="entry name" value="ATP-synt_Fo_a_6"/>
    <property type="match status" value="1"/>
</dbReference>
<dbReference type="FunFam" id="1.20.120.220:FF:000003">
    <property type="entry name" value="ATP synthase subunit a"/>
    <property type="match status" value="1"/>
</dbReference>
<dbReference type="Gene3D" id="1.20.120.220">
    <property type="entry name" value="ATP synthase, F0 complex, subunit A"/>
    <property type="match status" value="1"/>
</dbReference>
<dbReference type="HAMAP" id="MF_01393">
    <property type="entry name" value="ATP_synth_a_bact"/>
    <property type="match status" value="1"/>
</dbReference>
<dbReference type="InterPro" id="IPR000568">
    <property type="entry name" value="ATP_synth_F0_asu"/>
</dbReference>
<dbReference type="InterPro" id="IPR023011">
    <property type="entry name" value="ATP_synth_F0_asu_AS"/>
</dbReference>
<dbReference type="InterPro" id="IPR045083">
    <property type="entry name" value="ATP_synth_F0_asu_bact/mt"/>
</dbReference>
<dbReference type="InterPro" id="IPR035908">
    <property type="entry name" value="F0_ATP_A_sf"/>
</dbReference>
<dbReference type="NCBIfam" id="TIGR01131">
    <property type="entry name" value="ATP_synt_6_or_A"/>
    <property type="match status" value="1"/>
</dbReference>
<dbReference type="NCBIfam" id="NF004482">
    <property type="entry name" value="PRK05815.2-4"/>
    <property type="match status" value="1"/>
</dbReference>
<dbReference type="PANTHER" id="PTHR11410">
    <property type="entry name" value="ATP SYNTHASE SUBUNIT A"/>
    <property type="match status" value="1"/>
</dbReference>
<dbReference type="PANTHER" id="PTHR11410:SF0">
    <property type="entry name" value="ATP SYNTHASE SUBUNIT A"/>
    <property type="match status" value="1"/>
</dbReference>
<dbReference type="Pfam" id="PF00119">
    <property type="entry name" value="ATP-synt_A"/>
    <property type="match status" value="1"/>
</dbReference>
<dbReference type="PRINTS" id="PR00123">
    <property type="entry name" value="ATPASEA"/>
</dbReference>
<dbReference type="SUPFAM" id="SSF81336">
    <property type="entry name" value="F1F0 ATP synthase subunit A"/>
    <property type="match status" value="1"/>
</dbReference>
<dbReference type="PROSITE" id="PS00449">
    <property type="entry name" value="ATPASE_A"/>
    <property type="match status" value="1"/>
</dbReference>
<sequence length="242" mass="27512">MTLNPLVQFDIKKLIEIKIFGFDISFTNSSIYMLLASILALTYFYLAFYNWKLVPSRLQVSAEIVYNLVADMLNQNIGAKGHKFIPLFFSLFIFILFCNLLGMTPYSFTVTSHIIVTFALAILVFLTITIVGFVKHSLRFLTLFLPHGTPLWLAPLMIVIELFTYLARPISLSLRLAANMMAGHVLLKVIASFTISLMIYLKFISIPLMVILIGFEIFIAVLQAYIFTILSCMYLNDAINLH</sequence>
<name>ATP6_RICCK</name>
<reference key="1">
    <citation type="submission" date="2007-09" db="EMBL/GenBank/DDBJ databases">
        <title>Complete genome sequence of Rickettsia canadensis.</title>
        <authorList>
            <person name="Madan A."/>
            <person name="Fahey J."/>
            <person name="Helton E."/>
            <person name="Ketteman M."/>
            <person name="Madan A."/>
            <person name="Rodrigues S."/>
            <person name="Sanchez A."/>
            <person name="Whiting M."/>
            <person name="Dasch G."/>
            <person name="Eremeeva M."/>
        </authorList>
    </citation>
    <scope>NUCLEOTIDE SEQUENCE [LARGE SCALE GENOMIC DNA]</scope>
    <source>
        <strain>McKiel</strain>
    </source>
</reference>
<keyword id="KW-0066">ATP synthesis</keyword>
<keyword id="KW-0997">Cell inner membrane</keyword>
<keyword id="KW-1003">Cell membrane</keyword>
<keyword id="KW-0138">CF(0)</keyword>
<keyword id="KW-0375">Hydrogen ion transport</keyword>
<keyword id="KW-0406">Ion transport</keyword>
<keyword id="KW-0472">Membrane</keyword>
<keyword id="KW-0812">Transmembrane</keyword>
<keyword id="KW-1133">Transmembrane helix</keyword>
<keyword id="KW-0813">Transport</keyword>
<protein>
    <recommendedName>
        <fullName evidence="1">ATP synthase subunit a</fullName>
    </recommendedName>
    <alternativeName>
        <fullName evidence="1">ATP synthase F0 sector subunit a</fullName>
    </alternativeName>
    <alternativeName>
        <fullName evidence="1">F-ATPase subunit 6</fullName>
    </alternativeName>
</protein>
<organism>
    <name type="scientific">Rickettsia canadensis (strain McKiel)</name>
    <dbReference type="NCBI Taxonomy" id="293613"/>
    <lineage>
        <taxon>Bacteria</taxon>
        <taxon>Pseudomonadati</taxon>
        <taxon>Pseudomonadota</taxon>
        <taxon>Alphaproteobacteria</taxon>
        <taxon>Rickettsiales</taxon>
        <taxon>Rickettsiaceae</taxon>
        <taxon>Rickettsieae</taxon>
        <taxon>Rickettsia</taxon>
        <taxon>belli group</taxon>
    </lineage>
</organism>
<comment type="function">
    <text evidence="1">Key component of the proton channel; it plays a direct role in the translocation of protons across the membrane.</text>
</comment>
<comment type="subunit">
    <text evidence="1">F-type ATPases have 2 components, CF(1) - the catalytic core - and CF(0) - the membrane proton channel. CF(1) has five subunits: alpha(3), beta(3), gamma(1), delta(1), epsilon(1). CF(0) has three main subunits: a(1), b(2) and c(9-12). The alpha and beta chains form an alternating ring which encloses part of the gamma chain. CF(1) is attached to CF(0) by a central stalk formed by the gamma and epsilon chains, while a peripheral stalk is formed by the delta and b chains.</text>
</comment>
<comment type="subcellular location">
    <subcellularLocation>
        <location evidence="1">Cell inner membrane</location>
        <topology evidence="1">Multi-pass membrane protein</topology>
    </subcellularLocation>
</comment>
<comment type="similarity">
    <text evidence="1">Belongs to the ATPase A chain family.</text>
</comment>
<gene>
    <name evidence="1" type="primary">atpB</name>
    <name type="ordered locus">A1E_00100</name>
</gene>
<evidence type="ECO:0000255" key="1">
    <source>
        <dbReference type="HAMAP-Rule" id="MF_01393"/>
    </source>
</evidence>